<keyword id="KW-0496">Mitochondrion</keyword>
<keyword id="KW-1185">Reference proteome</keyword>
<keyword id="KW-0677">Repeat</keyword>
<keyword id="KW-0809">Transit peptide</keyword>
<name>CIM1_YEAST</name>
<protein>
    <recommendedName>
        <fullName evidence="3">Mitochondrial HMG-box protein CIM1</fullName>
    </recommendedName>
    <alternativeName>
        <fullName evidence="3">Copy number influence on Mtdna protein 1</fullName>
    </alternativeName>
</protein>
<gene>
    <name evidence="3" type="primary">CIM1</name>
    <name type="ordered locus">YOR114W</name>
    <name type="ORF">O3248</name>
    <name type="ORF">YOR3248w</name>
</gene>
<organism>
    <name type="scientific">Saccharomyces cerevisiae (strain ATCC 204508 / S288c)</name>
    <name type="common">Baker's yeast</name>
    <dbReference type="NCBI Taxonomy" id="559292"/>
    <lineage>
        <taxon>Eukaryota</taxon>
        <taxon>Fungi</taxon>
        <taxon>Dikarya</taxon>
        <taxon>Ascomycota</taxon>
        <taxon>Saccharomycotina</taxon>
        <taxon>Saccharomycetes</taxon>
        <taxon>Saccharomycetales</taxon>
        <taxon>Saccharomycetaceae</taxon>
        <taxon>Saccharomyces</taxon>
    </lineage>
</organism>
<feature type="transit peptide" description="Mitochondrion" evidence="1">
    <location>
        <begin position="1"/>
        <end position="90"/>
    </location>
</feature>
<feature type="chain" id="PRO_0000237656" description="Mitochondrial HMG-box protein CIM1">
    <location>
        <begin position="91"/>
        <end position="294"/>
    </location>
</feature>
<feature type="region of interest" description="HMG-box A" evidence="2">
    <location>
        <begin position="27"/>
        <end position="102"/>
    </location>
</feature>
<feature type="region of interest" description="HMG-box B" evidence="2">
    <location>
        <begin position="110"/>
        <end position="258"/>
    </location>
</feature>
<feature type="mutagenesis site" description="Leads to increased mtDNA levels." evidence="2">
    <original>W</original>
    <variation>A</variation>
    <location>
        <position position="72"/>
    </location>
</feature>
<feature type="mutagenesis site" description="Leads to increased mtDNA levels." evidence="2">
    <original>K</original>
    <variation>A</variation>
    <location>
        <position position="80"/>
    </location>
</feature>
<feature type="mutagenesis site" description="Leads to increased mtDNA levels." evidence="2">
    <original>W</original>
    <variation>A</variation>
    <location>
        <position position="218"/>
    </location>
</feature>
<feature type="mutagenesis site" description="Leads to increased mtDNA levels." evidence="2">
    <original>K</original>
    <variation>A</variation>
    <location>
        <position position="227"/>
    </location>
</feature>
<comment type="function">
    <text evidence="2">Mitochondrial HMG-box protein that limits the copy number of mitochondrial DNA (mtDNA), antagonizing HMG-box containing protein ABF2, a mtDNA packaging factor.</text>
</comment>
<comment type="subcellular location">
    <subcellularLocation>
        <location evidence="2">Mitochondrion matrix</location>
    </subcellularLocation>
</comment>
<comment type="disruption phenotype">
    <text evidence="2">Leads to increased mitochondrial DNA copy number.</text>
</comment>
<comment type="caution">
    <text evidence="2">CIM1 is not highly conserved on the protein sequence level but exhibits structural attributes indicative of an HMG-box protein.</text>
</comment>
<evidence type="ECO:0000255" key="1"/>
<evidence type="ECO:0000269" key="2">
    <source>
    </source>
</evidence>
<evidence type="ECO:0000303" key="3">
    <source>
    </source>
</evidence>
<dbReference type="EMBL" id="X94335">
    <property type="protein sequence ID" value="CAA64034.1"/>
    <property type="molecule type" value="Genomic_DNA"/>
</dbReference>
<dbReference type="EMBL" id="X90518">
    <property type="protein sequence ID" value="CAA62112.1"/>
    <property type="molecule type" value="Genomic_DNA"/>
</dbReference>
<dbReference type="EMBL" id="Z75022">
    <property type="protein sequence ID" value="CAA99312.1"/>
    <property type="molecule type" value="Genomic_DNA"/>
</dbReference>
<dbReference type="EMBL" id="BK006948">
    <property type="protein sequence ID" value="DAA10889.1"/>
    <property type="molecule type" value="Genomic_DNA"/>
</dbReference>
<dbReference type="PIR" id="S60991">
    <property type="entry name" value="S60991"/>
</dbReference>
<dbReference type="RefSeq" id="NP_014757.1">
    <property type="nucleotide sequence ID" value="NM_001183533.1"/>
</dbReference>
<dbReference type="BioGRID" id="34510">
    <property type="interactions" value="76"/>
</dbReference>
<dbReference type="DIP" id="DIP-3830N"/>
<dbReference type="FunCoup" id="Q12219">
    <property type="interactions" value="1"/>
</dbReference>
<dbReference type="IntAct" id="Q12219">
    <property type="interactions" value="2"/>
</dbReference>
<dbReference type="STRING" id="4932.YOR114W"/>
<dbReference type="PaxDb" id="4932-YOR114W"/>
<dbReference type="PeptideAtlas" id="Q12219"/>
<dbReference type="EnsemblFungi" id="YOR114W_mRNA">
    <property type="protein sequence ID" value="YOR114W"/>
    <property type="gene ID" value="YOR114W"/>
</dbReference>
<dbReference type="GeneID" id="854281"/>
<dbReference type="KEGG" id="sce:YOR114W"/>
<dbReference type="AGR" id="SGD:S000005640"/>
<dbReference type="SGD" id="S000005640">
    <property type="gene designation" value="CIM1"/>
</dbReference>
<dbReference type="VEuPathDB" id="FungiDB:YOR114W"/>
<dbReference type="eggNOG" id="ENOG502S6F5">
    <property type="taxonomic scope" value="Eukaryota"/>
</dbReference>
<dbReference type="HOGENOM" id="CLU_1034658_0_0_1"/>
<dbReference type="InParanoid" id="Q12219"/>
<dbReference type="OMA" id="HFARINY"/>
<dbReference type="OrthoDB" id="4064753at2759"/>
<dbReference type="BioCyc" id="YEAST:G3O-33643-MONOMER"/>
<dbReference type="BioGRID-ORCS" id="854281">
    <property type="hits" value="1 hit in 10 CRISPR screens"/>
</dbReference>
<dbReference type="PRO" id="PR:Q12219"/>
<dbReference type="Proteomes" id="UP000002311">
    <property type="component" value="Chromosome XV"/>
</dbReference>
<dbReference type="RNAct" id="Q12219">
    <property type="molecule type" value="protein"/>
</dbReference>
<dbReference type="GO" id="GO:0005759">
    <property type="term" value="C:mitochondrial matrix"/>
    <property type="evidence" value="ECO:0000314"/>
    <property type="project" value="SGD"/>
</dbReference>
<dbReference type="GO" id="GO:0000002">
    <property type="term" value="P:mitochondrial genome maintenance"/>
    <property type="evidence" value="ECO:0000315"/>
    <property type="project" value="SGD"/>
</dbReference>
<sequence length="294" mass="34975">MKATLLLKAQLSPVSYTTKKSFQRQLNRTPYTAFQYFFQLEVQKLHNVSKYEDIINHVRGNSNFKRFARNEWDSMSLTKKRLYYASFCQSMDIDILNVSKIELAKRLEIPIPAMSEYLLFRNKFKVKFDSHCSSLERKDRKSVPRPSITRKVATTEICSKSRSNTPVGKINPRKRLVALKRISRSENTAKNHSHEAQNYLYDYMKRFQQMCKECRYAWNEEVDYDQKLEIRKKLQVWRAKFEEMMDNEIQILQKNMDIMSKFGLRSESYLTAANHDTNTQPNNILPMTYLLKKK</sequence>
<accession>Q12219</accession>
<accession>D6W2H3</accession>
<proteinExistence type="evidence at protein level"/>
<reference key="1">
    <citation type="journal article" date="1997" name="Yeast">
        <title>DNA sequencing and analysis of 130 kb from yeast chromosome XV.</title>
        <authorList>
            <person name="Voss H."/>
            <person name="Benes V."/>
            <person name="Andrade M.A."/>
            <person name="Valencia A."/>
            <person name="Rechmann S."/>
            <person name="Teodoru C."/>
            <person name="Schwager C."/>
            <person name="Paces V."/>
            <person name="Sander C."/>
            <person name="Ansorge W."/>
        </authorList>
    </citation>
    <scope>NUCLEOTIDE SEQUENCE [GENOMIC DNA]</scope>
    <source>
        <strain>ATCC 96604 / S288c / FY1679</strain>
    </source>
</reference>
<reference key="2">
    <citation type="journal article" date="1996" name="Yeast">
        <title>Sequencing and analysis of 51 kb on the right arm of chromosome XV from Saccharomyces cerevisiae reveals 30 open reading frames.</title>
        <authorList>
            <person name="Wiemann S."/>
            <person name="Rechmann S."/>
            <person name="Benes V."/>
            <person name="Voss H."/>
            <person name="Schwager C."/>
            <person name="Vlcek C."/>
            <person name="Stegemann J."/>
            <person name="Zimmermann J."/>
            <person name="Erfle H."/>
            <person name="Paces V."/>
            <person name="Ansorge W."/>
        </authorList>
    </citation>
    <scope>NUCLEOTIDE SEQUENCE [GENOMIC DNA]</scope>
    <source>
        <strain>ATCC 96604 / S288c / FY1679</strain>
    </source>
</reference>
<reference key="3">
    <citation type="journal article" date="1997" name="Nature">
        <title>The nucleotide sequence of Saccharomyces cerevisiae chromosome XV.</title>
        <authorList>
            <person name="Dujon B."/>
            <person name="Albermann K."/>
            <person name="Aldea M."/>
            <person name="Alexandraki D."/>
            <person name="Ansorge W."/>
            <person name="Arino J."/>
            <person name="Benes V."/>
            <person name="Bohn C."/>
            <person name="Bolotin-Fukuhara M."/>
            <person name="Bordonne R."/>
            <person name="Boyer J."/>
            <person name="Camasses A."/>
            <person name="Casamayor A."/>
            <person name="Casas C."/>
            <person name="Cheret G."/>
            <person name="Cziepluch C."/>
            <person name="Daignan-Fornier B."/>
            <person name="Dang V.-D."/>
            <person name="de Haan M."/>
            <person name="Delius H."/>
            <person name="Durand P."/>
            <person name="Fairhead C."/>
            <person name="Feldmann H."/>
            <person name="Gaillon L."/>
            <person name="Galisson F."/>
            <person name="Gamo F.-J."/>
            <person name="Gancedo C."/>
            <person name="Goffeau A."/>
            <person name="Goulding S.E."/>
            <person name="Grivell L.A."/>
            <person name="Habbig B."/>
            <person name="Hand N.J."/>
            <person name="Hani J."/>
            <person name="Hattenhorst U."/>
            <person name="Hebling U."/>
            <person name="Hernando Y."/>
            <person name="Herrero E."/>
            <person name="Heumann K."/>
            <person name="Hiesel R."/>
            <person name="Hilger F."/>
            <person name="Hofmann B."/>
            <person name="Hollenberg C.P."/>
            <person name="Hughes B."/>
            <person name="Jauniaux J.-C."/>
            <person name="Kalogeropoulos A."/>
            <person name="Katsoulou C."/>
            <person name="Kordes E."/>
            <person name="Lafuente M.J."/>
            <person name="Landt O."/>
            <person name="Louis E.J."/>
            <person name="Maarse A.C."/>
            <person name="Madania A."/>
            <person name="Mannhaupt G."/>
            <person name="Marck C."/>
            <person name="Martin R.P."/>
            <person name="Mewes H.-W."/>
            <person name="Michaux G."/>
            <person name="Paces V."/>
            <person name="Parle-McDermott A.G."/>
            <person name="Pearson B.M."/>
            <person name="Perrin A."/>
            <person name="Pettersson B."/>
            <person name="Poch O."/>
            <person name="Pohl T.M."/>
            <person name="Poirey R."/>
            <person name="Portetelle D."/>
            <person name="Pujol A."/>
            <person name="Purnelle B."/>
            <person name="Ramezani Rad M."/>
            <person name="Rechmann S."/>
            <person name="Schwager C."/>
            <person name="Schweizer M."/>
            <person name="Sor F."/>
            <person name="Sterky F."/>
            <person name="Tarassov I.A."/>
            <person name="Teodoru C."/>
            <person name="Tettelin H."/>
            <person name="Thierry A."/>
            <person name="Tobiasch E."/>
            <person name="Tzermia M."/>
            <person name="Uhlen M."/>
            <person name="Unseld M."/>
            <person name="Valens M."/>
            <person name="Vandenbol M."/>
            <person name="Vetter I."/>
            <person name="Vlcek C."/>
            <person name="Voet M."/>
            <person name="Volckaert G."/>
            <person name="Voss H."/>
            <person name="Wambutt R."/>
            <person name="Wedler H."/>
            <person name="Wiemann S."/>
            <person name="Winsor B."/>
            <person name="Wolfe K.H."/>
            <person name="Zollner A."/>
            <person name="Zumstein E."/>
            <person name="Kleine K."/>
        </authorList>
    </citation>
    <scope>NUCLEOTIDE SEQUENCE [LARGE SCALE GENOMIC DNA]</scope>
    <source>
        <strain>ATCC 204508 / S288c</strain>
    </source>
</reference>
<reference key="4">
    <citation type="journal article" date="2014" name="G3 (Bethesda)">
        <title>The reference genome sequence of Saccharomyces cerevisiae: Then and now.</title>
        <authorList>
            <person name="Engel S.R."/>
            <person name="Dietrich F.S."/>
            <person name="Fisk D.G."/>
            <person name="Binkley G."/>
            <person name="Balakrishnan R."/>
            <person name="Costanzo M.C."/>
            <person name="Dwight S.S."/>
            <person name="Hitz B.C."/>
            <person name="Karra K."/>
            <person name="Nash R.S."/>
            <person name="Weng S."/>
            <person name="Wong E.D."/>
            <person name="Lloyd P."/>
            <person name="Skrzypek M.S."/>
            <person name="Miyasato S.R."/>
            <person name="Simison M."/>
            <person name="Cherry J.M."/>
        </authorList>
    </citation>
    <scope>GENOME REANNOTATION</scope>
    <source>
        <strain>ATCC 204508 / S288c</strain>
    </source>
</reference>
<reference key="5">
    <citation type="journal article" date="2023" name="Nucleic Acids Res.">
        <title>Two mitochondrial HMG-box proteins, Cim1 and Abf2, antagonistically regulate mtDNA copy number in Saccharomyces cerevisiae.</title>
        <authorList>
            <person name="Schrott S."/>
            <person name="Osman C."/>
        </authorList>
    </citation>
    <scope>FUNCTION</scope>
    <scope>DOMAIN</scope>
    <scope>DISRUPTION PHENOTYPE</scope>
    <scope>SUBCELLULAR LOCATION</scope>
    <scope>MUTAGENESIS OF TRP-72; LYS-80; TRP-218 AND LYS-227</scope>
</reference>